<evidence type="ECO:0000255" key="1">
    <source>
        <dbReference type="HAMAP-Rule" id="MF_01523"/>
    </source>
</evidence>
<protein>
    <recommendedName>
        <fullName evidence="1">Ribosomal RNA small subunit methyltransferase J</fullName>
        <ecNumber evidence="1">2.1.1.242</ecNumber>
    </recommendedName>
    <alternativeName>
        <fullName evidence="1">16S rRNA m2G1516 methyltransferase</fullName>
    </alternativeName>
    <alternativeName>
        <fullName evidence="1">rRNA (guanine-N(2)-)-methyltransferase</fullName>
    </alternativeName>
</protein>
<keyword id="KW-0963">Cytoplasm</keyword>
<keyword id="KW-0489">Methyltransferase</keyword>
<keyword id="KW-0698">rRNA processing</keyword>
<keyword id="KW-0949">S-adenosyl-L-methionine</keyword>
<keyword id="KW-0808">Transferase</keyword>
<gene>
    <name evidence="1" type="primary">rsmJ</name>
    <name type="synonym">yhiQ</name>
    <name type="ordered locus">SBO_3495</name>
</gene>
<proteinExistence type="inferred from homology"/>
<reference key="1">
    <citation type="journal article" date="2005" name="Nucleic Acids Res.">
        <title>Genome dynamics and diversity of Shigella species, the etiologic agents of bacillary dysentery.</title>
        <authorList>
            <person name="Yang F."/>
            <person name="Yang J."/>
            <person name="Zhang X."/>
            <person name="Chen L."/>
            <person name="Jiang Y."/>
            <person name="Yan Y."/>
            <person name="Tang X."/>
            <person name="Wang J."/>
            <person name="Xiong Z."/>
            <person name="Dong J."/>
            <person name="Xue Y."/>
            <person name="Zhu Y."/>
            <person name="Xu X."/>
            <person name="Sun L."/>
            <person name="Chen S."/>
            <person name="Nie H."/>
            <person name="Peng J."/>
            <person name="Xu J."/>
            <person name="Wang Y."/>
            <person name="Yuan Z."/>
            <person name="Wen Y."/>
            <person name="Yao Z."/>
            <person name="Shen Y."/>
            <person name="Qiang B."/>
            <person name="Hou Y."/>
            <person name="Yu J."/>
            <person name="Jin Q."/>
        </authorList>
    </citation>
    <scope>NUCLEOTIDE SEQUENCE [LARGE SCALE GENOMIC DNA]</scope>
    <source>
        <strain>Sb227</strain>
    </source>
</reference>
<comment type="function">
    <text evidence="1">Specifically methylates the guanosine in position 1516 of 16S rRNA.</text>
</comment>
<comment type="catalytic activity">
    <reaction evidence="1">
        <text>guanosine(1516) in 16S rRNA + S-adenosyl-L-methionine = N(2)-methylguanosine(1516) in 16S rRNA + S-adenosyl-L-homocysteine + H(+)</text>
        <dbReference type="Rhea" id="RHEA:43220"/>
        <dbReference type="Rhea" id="RHEA-COMP:10412"/>
        <dbReference type="Rhea" id="RHEA-COMP:10413"/>
        <dbReference type="ChEBI" id="CHEBI:15378"/>
        <dbReference type="ChEBI" id="CHEBI:57856"/>
        <dbReference type="ChEBI" id="CHEBI:59789"/>
        <dbReference type="ChEBI" id="CHEBI:74269"/>
        <dbReference type="ChEBI" id="CHEBI:74481"/>
        <dbReference type="EC" id="2.1.1.242"/>
    </reaction>
</comment>
<comment type="subcellular location">
    <subcellularLocation>
        <location evidence="1">Cytoplasm</location>
    </subcellularLocation>
</comment>
<comment type="similarity">
    <text evidence="1">Belongs to the methyltransferase superfamily. RsmJ family.</text>
</comment>
<sequence length="250" mass="26949">MKICLIDETGAGDGALSVLAARWGLEHDEDNLMALVLTPEHLELRKRDEPKLGGIFVDFVGGAMAHRRKFGGGRGEAVAKAVGIKGDYLPDVVDATAGLGRDAFVLASVGCRVRMLERNPVVAALLDDGLARGYADAEIGGWLQERLQLIHASSLTALTDITPRPQVVYLDPMFPHKQKSALVKKEMRVFQSLVGPDLDADGLLEPARLLATKRVVVKRPDYAPPLANVTTPNAVVTKGHRFDIYAGTPV</sequence>
<feature type="chain" id="PRO_0000244283" description="Ribosomal RNA small subunit methyltransferase J">
    <location>
        <begin position="1"/>
        <end position="250"/>
    </location>
</feature>
<feature type="binding site" evidence="1">
    <location>
        <begin position="101"/>
        <end position="102"/>
    </location>
    <ligand>
        <name>S-adenosyl-L-methionine</name>
        <dbReference type="ChEBI" id="CHEBI:59789"/>
    </ligand>
</feature>
<feature type="binding site" evidence="1">
    <location>
        <begin position="117"/>
        <end position="118"/>
    </location>
    <ligand>
        <name>S-adenosyl-L-methionine</name>
        <dbReference type="ChEBI" id="CHEBI:59789"/>
    </ligand>
</feature>
<feature type="binding site" evidence="1">
    <location>
        <begin position="153"/>
        <end position="154"/>
    </location>
    <ligand>
        <name>S-adenosyl-L-methionine</name>
        <dbReference type="ChEBI" id="CHEBI:59789"/>
    </ligand>
</feature>
<feature type="binding site" evidence="1">
    <location>
        <position position="171"/>
    </location>
    <ligand>
        <name>S-adenosyl-L-methionine</name>
        <dbReference type="ChEBI" id="CHEBI:59789"/>
    </ligand>
</feature>
<organism>
    <name type="scientific">Shigella boydii serotype 4 (strain Sb227)</name>
    <dbReference type="NCBI Taxonomy" id="300268"/>
    <lineage>
        <taxon>Bacteria</taxon>
        <taxon>Pseudomonadati</taxon>
        <taxon>Pseudomonadota</taxon>
        <taxon>Gammaproteobacteria</taxon>
        <taxon>Enterobacterales</taxon>
        <taxon>Enterobacteriaceae</taxon>
        <taxon>Shigella</taxon>
    </lineage>
</organism>
<name>RSMJ_SHIBS</name>
<accession>Q31VC8</accession>
<dbReference type="EC" id="2.1.1.242" evidence="1"/>
<dbReference type="EMBL" id="CP000036">
    <property type="protein sequence ID" value="ABB67980.1"/>
    <property type="molecule type" value="Genomic_DNA"/>
</dbReference>
<dbReference type="RefSeq" id="WP_000686609.1">
    <property type="nucleotide sequence ID" value="NC_007613.1"/>
</dbReference>
<dbReference type="SMR" id="Q31VC8"/>
<dbReference type="KEGG" id="sbo:SBO_3495"/>
<dbReference type="HOGENOM" id="CLU_076324_0_0_6"/>
<dbReference type="Proteomes" id="UP000007067">
    <property type="component" value="Chromosome"/>
</dbReference>
<dbReference type="GO" id="GO:0005737">
    <property type="term" value="C:cytoplasm"/>
    <property type="evidence" value="ECO:0007669"/>
    <property type="project" value="UniProtKB-SubCell"/>
</dbReference>
<dbReference type="GO" id="GO:0008990">
    <property type="term" value="F:rRNA (guanine-N2-)-methyltransferase activity"/>
    <property type="evidence" value="ECO:0007669"/>
    <property type="project" value="UniProtKB-UniRule"/>
</dbReference>
<dbReference type="CDD" id="cd02440">
    <property type="entry name" value="AdoMet_MTases"/>
    <property type="match status" value="1"/>
</dbReference>
<dbReference type="FunFam" id="3.40.1630.10:FF:000001">
    <property type="entry name" value="Ribosomal RNA small subunit methyltransferase J"/>
    <property type="match status" value="1"/>
</dbReference>
<dbReference type="FunFam" id="3.40.50.150:FF:000072">
    <property type="entry name" value="Ribosomal RNA small subunit methyltransferase J"/>
    <property type="match status" value="1"/>
</dbReference>
<dbReference type="Gene3D" id="3.40.50.150">
    <property type="entry name" value="Vaccinia Virus protein VP39"/>
    <property type="match status" value="1"/>
</dbReference>
<dbReference type="Gene3D" id="3.40.1630.10">
    <property type="entry name" value="YhiQ-like domain"/>
    <property type="match status" value="1"/>
</dbReference>
<dbReference type="HAMAP" id="MF_01523">
    <property type="entry name" value="16SrRNA_methyltr_J"/>
    <property type="match status" value="1"/>
</dbReference>
<dbReference type="InterPro" id="IPR007536">
    <property type="entry name" value="16SrRNA_methylTrfase_J"/>
</dbReference>
<dbReference type="InterPro" id="IPR029063">
    <property type="entry name" value="SAM-dependent_MTases_sf"/>
</dbReference>
<dbReference type="NCBIfam" id="NF008012">
    <property type="entry name" value="PRK10742.1"/>
    <property type="match status" value="1"/>
</dbReference>
<dbReference type="PANTHER" id="PTHR36112">
    <property type="entry name" value="RIBOSOMAL RNA SMALL SUBUNIT METHYLTRANSFERASE J"/>
    <property type="match status" value="1"/>
</dbReference>
<dbReference type="PANTHER" id="PTHR36112:SF1">
    <property type="entry name" value="RIBOSOMAL RNA SMALL SUBUNIT METHYLTRANSFERASE J"/>
    <property type="match status" value="1"/>
</dbReference>
<dbReference type="Pfam" id="PF04445">
    <property type="entry name" value="SAM_MT"/>
    <property type="match status" value="1"/>
</dbReference>
<dbReference type="SUPFAM" id="SSF53335">
    <property type="entry name" value="S-adenosyl-L-methionine-dependent methyltransferases"/>
    <property type="match status" value="1"/>
</dbReference>